<gene>
    <name evidence="1" type="primary">nhaA</name>
    <name type="ordered locus">SBO_0018</name>
</gene>
<protein>
    <recommendedName>
        <fullName evidence="1">Na(+)/H(+) antiporter NhaA</fullName>
    </recommendedName>
    <alternativeName>
        <fullName evidence="1">Sodium/proton antiporter NhaA</fullName>
    </alternativeName>
</protein>
<evidence type="ECO:0000255" key="1">
    <source>
        <dbReference type="HAMAP-Rule" id="MF_01844"/>
    </source>
</evidence>
<reference key="1">
    <citation type="journal article" date="2005" name="Nucleic Acids Res.">
        <title>Genome dynamics and diversity of Shigella species, the etiologic agents of bacillary dysentery.</title>
        <authorList>
            <person name="Yang F."/>
            <person name="Yang J."/>
            <person name="Zhang X."/>
            <person name="Chen L."/>
            <person name="Jiang Y."/>
            <person name="Yan Y."/>
            <person name="Tang X."/>
            <person name="Wang J."/>
            <person name="Xiong Z."/>
            <person name="Dong J."/>
            <person name="Xue Y."/>
            <person name="Zhu Y."/>
            <person name="Xu X."/>
            <person name="Sun L."/>
            <person name="Chen S."/>
            <person name="Nie H."/>
            <person name="Peng J."/>
            <person name="Xu J."/>
            <person name="Wang Y."/>
            <person name="Yuan Z."/>
            <person name="Wen Y."/>
            <person name="Yao Z."/>
            <person name="Shen Y."/>
            <person name="Qiang B."/>
            <person name="Hou Y."/>
            <person name="Yu J."/>
            <person name="Jin Q."/>
        </authorList>
    </citation>
    <scope>NUCLEOTIDE SEQUENCE [LARGE SCALE GENOMIC DNA]</scope>
    <source>
        <strain>Sb227</strain>
    </source>
</reference>
<comment type="function">
    <text evidence="1">Na(+)/H(+) antiporter that extrudes sodium in exchange for external protons.</text>
</comment>
<comment type="catalytic activity">
    <reaction evidence="1">
        <text>Na(+)(in) + 2 H(+)(out) = Na(+)(out) + 2 H(+)(in)</text>
        <dbReference type="Rhea" id="RHEA:29251"/>
        <dbReference type="ChEBI" id="CHEBI:15378"/>
        <dbReference type="ChEBI" id="CHEBI:29101"/>
    </reaction>
    <physiologicalReaction direction="left-to-right" evidence="1">
        <dbReference type="Rhea" id="RHEA:29252"/>
    </physiologicalReaction>
</comment>
<comment type="subcellular location">
    <subcellularLocation>
        <location evidence="1">Cell inner membrane</location>
        <topology evidence="1">Multi-pass membrane protein</topology>
    </subcellularLocation>
</comment>
<comment type="similarity">
    <text evidence="1">Belongs to the NhaA Na(+)/H(+) (TC 2.A.33) antiporter family.</text>
</comment>
<organism>
    <name type="scientific">Shigella boydii serotype 4 (strain Sb227)</name>
    <dbReference type="NCBI Taxonomy" id="300268"/>
    <lineage>
        <taxon>Bacteria</taxon>
        <taxon>Pseudomonadati</taxon>
        <taxon>Pseudomonadota</taxon>
        <taxon>Gammaproteobacteria</taxon>
        <taxon>Enterobacterales</taxon>
        <taxon>Enterobacteriaceae</taxon>
        <taxon>Shigella</taxon>
    </lineage>
</organism>
<dbReference type="EMBL" id="CP000036">
    <property type="protein sequence ID" value="ABB64754.1"/>
    <property type="molecule type" value="Genomic_DNA"/>
</dbReference>
<dbReference type="RefSeq" id="WP_000681368.1">
    <property type="nucleotide sequence ID" value="NC_007613.1"/>
</dbReference>
<dbReference type="SMR" id="Q326K4"/>
<dbReference type="GeneID" id="93777422"/>
<dbReference type="KEGG" id="sbo:SBO_0018"/>
<dbReference type="HOGENOM" id="CLU_015803_1_0_6"/>
<dbReference type="Proteomes" id="UP000007067">
    <property type="component" value="Chromosome"/>
</dbReference>
<dbReference type="GO" id="GO:0005886">
    <property type="term" value="C:plasma membrane"/>
    <property type="evidence" value="ECO:0007669"/>
    <property type="project" value="UniProtKB-SubCell"/>
</dbReference>
<dbReference type="GO" id="GO:0015385">
    <property type="term" value="F:sodium:proton antiporter activity"/>
    <property type="evidence" value="ECO:0007669"/>
    <property type="project" value="TreeGrafter"/>
</dbReference>
<dbReference type="GO" id="GO:0006885">
    <property type="term" value="P:regulation of pH"/>
    <property type="evidence" value="ECO:0007669"/>
    <property type="project" value="InterPro"/>
</dbReference>
<dbReference type="FunFam" id="1.20.1530.10:FF:000001">
    <property type="entry name" value="Na(+)/H(+) antiporter NhaA"/>
    <property type="match status" value="1"/>
</dbReference>
<dbReference type="Gene3D" id="1.20.1530.10">
    <property type="entry name" value="Na+/H+ antiporter like domain"/>
    <property type="match status" value="1"/>
</dbReference>
<dbReference type="HAMAP" id="MF_01844">
    <property type="entry name" value="NhaA"/>
    <property type="match status" value="1"/>
</dbReference>
<dbReference type="InterPro" id="IPR023171">
    <property type="entry name" value="Na/H_antiporter_dom_sf"/>
</dbReference>
<dbReference type="InterPro" id="IPR004670">
    <property type="entry name" value="NhaA"/>
</dbReference>
<dbReference type="NCBIfam" id="TIGR00773">
    <property type="entry name" value="NhaA"/>
    <property type="match status" value="1"/>
</dbReference>
<dbReference type="NCBIfam" id="NF007111">
    <property type="entry name" value="PRK09560.1"/>
    <property type="match status" value="1"/>
</dbReference>
<dbReference type="NCBIfam" id="NF007112">
    <property type="entry name" value="PRK09561.1"/>
    <property type="match status" value="1"/>
</dbReference>
<dbReference type="PANTHER" id="PTHR30341:SF0">
    <property type="entry name" value="NA(+)_H(+) ANTIPORTER NHAA"/>
    <property type="match status" value="1"/>
</dbReference>
<dbReference type="PANTHER" id="PTHR30341">
    <property type="entry name" value="SODIUM ION/PROTON ANTIPORTER NHAA-RELATED"/>
    <property type="match status" value="1"/>
</dbReference>
<dbReference type="Pfam" id="PF06965">
    <property type="entry name" value="Na_H_antiport_1"/>
    <property type="match status" value="1"/>
</dbReference>
<feature type="chain" id="PRO_0000334435" description="Na(+)/H(+) antiporter NhaA">
    <location>
        <begin position="1"/>
        <end position="388"/>
    </location>
</feature>
<feature type="topological domain" description="Cytoplasmic" evidence="1">
    <location>
        <begin position="1"/>
        <end position="11"/>
    </location>
</feature>
<feature type="transmembrane region" description="Helical; Name=1" evidence="1">
    <location>
        <begin position="12"/>
        <end position="31"/>
    </location>
</feature>
<feature type="topological domain" description="Periplasmic" evidence="1">
    <location>
        <begin position="32"/>
        <end position="58"/>
    </location>
</feature>
<feature type="transmembrane region" description="Helical; Name=2" evidence="1">
    <location>
        <begin position="59"/>
        <end position="80"/>
    </location>
</feature>
<feature type="topological domain" description="Cytoplasmic" evidence="1">
    <location>
        <begin position="81"/>
        <end position="96"/>
    </location>
</feature>
<feature type="transmembrane region" description="Helical; Name=3" evidence="1">
    <location>
        <begin position="97"/>
        <end position="116"/>
    </location>
</feature>
<feature type="topological domain" description="Periplasmic" evidence="1">
    <location>
        <begin position="117"/>
        <end position="122"/>
    </location>
</feature>
<feature type="transmembrane region" description="Helical; Name=4" evidence="1">
    <location>
        <begin position="123"/>
        <end position="130"/>
    </location>
</feature>
<feature type="topological domain" description="Cytoplasmic" evidence="1">
    <location>
        <begin position="131"/>
        <end position="154"/>
    </location>
</feature>
<feature type="transmembrane region" description="Helical; Name=5" evidence="1">
    <location>
        <begin position="155"/>
        <end position="176"/>
    </location>
</feature>
<feature type="topological domain" description="Periplasmic" evidence="1">
    <location>
        <begin position="177"/>
        <end position="180"/>
    </location>
</feature>
<feature type="transmembrane region" description="Helical; Name=6" evidence="1">
    <location>
        <begin position="181"/>
        <end position="200"/>
    </location>
</feature>
<feature type="topological domain" description="Cytoplasmic" evidence="1">
    <location>
        <begin position="201"/>
        <end position="204"/>
    </location>
</feature>
<feature type="transmembrane region" description="Helical; Name=7" evidence="1">
    <location>
        <begin position="205"/>
        <end position="222"/>
    </location>
</feature>
<feature type="topological domain" description="Periplasmic" evidence="1">
    <location>
        <position position="223"/>
    </location>
</feature>
<feature type="transmembrane region" description="Helical; Name=8" evidence="1">
    <location>
        <begin position="224"/>
        <end position="236"/>
    </location>
</feature>
<feature type="topological domain" description="Cytoplasmic" evidence="1">
    <location>
        <begin position="237"/>
        <end position="253"/>
    </location>
</feature>
<feature type="transmembrane region" description="Helical; Name=9" evidence="1">
    <location>
        <begin position="254"/>
        <end position="272"/>
    </location>
</feature>
<feature type="topological domain" description="Periplasmic" evidence="1">
    <location>
        <begin position="273"/>
        <end position="286"/>
    </location>
</feature>
<feature type="transmembrane region" description="Helical; Name=10" evidence="1">
    <location>
        <begin position="287"/>
        <end position="310"/>
    </location>
</feature>
<feature type="topological domain" description="Cytoplasmic" evidence="1">
    <location>
        <begin position="311"/>
        <end position="339"/>
    </location>
</feature>
<feature type="transmembrane region" description="Helical; Name=11" evidence="1">
    <location>
        <begin position="340"/>
        <end position="350"/>
    </location>
</feature>
<feature type="topological domain" description="Periplasmic" evidence="1">
    <location>
        <begin position="351"/>
        <end position="357"/>
    </location>
</feature>
<feature type="transmembrane region" description="Helical; Name=12" evidence="1">
    <location>
        <begin position="358"/>
        <end position="380"/>
    </location>
</feature>
<feature type="topological domain" description="Cytoplasmic" evidence="1">
    <location>
        <begin position="381"/>
        <end position="388"/>
    </location>
</feature>
<accession>Q326K4</accession>
<keyword id="KW-0050">Antiport</keyword>
<keyword id="KW-0997">Cell inner membrane</keyword>
<keyword id="KW-1003">Cell membrane</keyword>
<keyword id="KW-0406">Ion transport</keyword>
<keyword id="KW-0472">Membrane</keyword>
<keyword id="KW-0915">Sodium</keyword>
<keyword id="KW-0739">Sodium transport</keyword>
<keyword id="KW-0812">Transmembrane</keyword>
<keyword id="KW-1133">Transmembrane helix</keyword>
<keyword id="KW-0813">Transport</keyword>
<proteinExistence type="inferred from homology"/>
<name>NHAA_SHIBS</name>
<sequence length="388" mass="41374">MKHLHRFFSSDASGGIILIIAAILAMMMANSGATSGWYHDFLETPVQLRVGSLEINKNMLLWINDALMAVFFLLVGLEVKRELMQGSLASLRQAAFPVIAAIGGMIVPALLYLAFNYADPITREGWAIPAATDIAFALGVLALLGSRVPLALKIFLMALAIIDDLGAIIIIALFYTNDLSMASLGVAAVAIAVLAVLNLCGVRRTGVYILVGVVLWTAVLKSGVHATLAGVIVGFFIPLKEKHGRSPAKRLEHVLHPWVAYLILPLFAFANAGVSLQGVTLDGLTSILPLGIIAGLLIGKPLGISLFCWLALRLKLAHLPEGTTYQQIMAVGILCGIGFTMSIFIASLAFGSVDPELINWAKLGILVGSISSAVIGYSWLRVRLRPSV</sequence>